<sequence length="523" mass="57074">MTSVLSSTPTSIPIIAGAQEALRDTLQQPTSVQYVPAAATSSLSDNVQLQSSNDSTINGVVIGLLSSFGSAILIALIFLIVYFFKYTSSGRILLDRIGRPGEYDDEQAFAKEEAEALEEMDDLQRTEYLRAKAFVQSNPPDSLPTDISLSQYLAIQEKGVSAWEFEPELEIANCFVEARTEIEFFDSECCTLTNLPVPKQNEVYYWESKIYDKPENTLISIGVATKPYPLFRLPGWHKYSVAYTSTGHRRYNQPFSGPVYGPQYVQGDVIGVGYRPRTGTIFFTRNGKKLEDVAHGLKSQNLFPAVGANGPCTVHVNFGQSGFVFIEANVKKWGLAPMTGSLAPPPPYGSEQGSILLEAGRESAQSSNGYYQPDPRHGRTRSGNFRHGPPTSPGPLRSPTDISLAQLTHIPSHEEPGEASNSSTPAPTGNTTTQPGLSVHDNAQPPPEYTSPLPSEAGSPRGSTDGERTPMLRRKTTPPPIPSYNDAVAQRNRSNSHRDQVGSRRERSDSHQARHGDGSPSRS</sequence>
<protein>
    <recommendedName>
        <fullName>Protein ssh4</fullName>
    </recommendedName>
</protein>
<dbReference type="EMBL" id="CH476629">
    <property type="protein sequence ID" value="EDO04916.1"/>
    <property type="molecule type" value="Genomic_DNA"/>
</dbReference>
<dbReference type="RefSeq" id="XP_001591953.1">
    <property type="nucleotide sequence ID" value="XM_001591903.1"/>
</dbReference>
<dbReference type="SMR" id="A7EQ00"/>
<dbReference type="FunCoup" id="A7EQ00">
    <property type="interactions" value="28"/>
</dbReference>
<dbReference type="STRING" id="665079.A7EQ00"/>
<dbReference type="GlyCosmos" id="A7EQ00">
    <property type="glycosylation" value="3 sites, No reported glycans"/>
</dbReference>
<dbReference type="EnsemblFungi" id="EDO04916">
    <property type="protein sequence ID" value="EDO04916"/>
    <property type="gene ID" value="SS1G_07399"/>
</dbReference>
<dbReference type="GeneID" id="5488130"/>
<dbReference type="KEGG" id="ssl:SS1G_07399"/>
<dbReference type="eggNOG" id="KOG1477">
    <property type="taxonomic scope" value="Eukaryota"/>
</dbReference>
<dbReference type="HOGENOM" id="CLU_016552_1_1_1"/>
<dbReference type="InParanoid" id="A7EQ00"/>
<dbReference type="OMA" id="FFFKYTR"/>
<dbReference type="Proteomes" id="UP000001312">
    <property type="component" value="Unassembled WGS sequence"/>
</dbReference>
<dbReference type="GO" id="GO:0010008">
    <property type="term" value="C:endosome membrane"/>
    <property type="evidence" value="ECO:0007669"/>
    <property type="project" value="UniProtKB-SubCell"/>
</dbReference>
<dbReference type="GO" id="GO:0005774">
    <property type="term" value="C:vacuolar membrane"/>
    <property type="evidence" value="ECO:0007669"/>
    <property type="project" value="UniProtKB-SubCell"/>
</dbReference>
<dbReference type="GO" id="GO:0043328">
    <property type="term" value="P:protein transport to vacuole involved in ubiquitin-dependent protein catabolic process via the multivesicular body sorting pathway"/>
    <property type="evidence" value="ECO:0000318"/>
    <property type="project" value="GO_Central"/>
</dbReference>
<dbReference type="CDD" id="cd12910">
    <property type="entry name" value="SPRY_SSH4_like"/>
    <property type="match status" value="1"/>
</dbReference>
<dbReference type="FunFam" id="2.60.120.920:FF:000065">
    <property type="entry name" value="Ear1p"/>
    <property type="match status" value="1"/>
</dbReference>
<dbReference type="Gene3D" id="2.60.120.920">
    <property type="match status" value="1"/>
</dbReference>
<dbReference type="InterPro" id="IPR001870">
    <property type="entry name" value="B30.2/SPRY"/>
</dbReference>
<dbReference type="InterPro" id="IPR043136">
    <property type="entry name" value="B30.2/SPRY_sf"/>
</dbReference>
<dbReference type="InterPro" id="IPR013320">
    <property type="entry name" value="ConA-like_dom_sf"/>
</dbReference>
<dbReference type="InterPro" id="IPR003877">
    <property type="entry name" value="SPRY_dom"/>
</dbReference>
<dbReference type="InterPro" id="IPR035780">
    <property type="entry name" value="SPRY_Ssh4-like"/>
</dbReference>
<dbReference type="InterPro" id="IPR050618">
    <property type="entry name" value="Ubq-SigPath_Reg"/>
</dbReference>
<dbReference type="PANTHER" id="PTHR12864">
    <property type="entry name" value="RAN BINDING PROTEIN 9-RELATED"/>
    <property type="match status" value="1"/>
</dbReference>
<dbReference type="Pfam" id="PF00622">
    <property type="entry name" value="SPRY"/>
    <property type="match status" value="1"/>
</dbReference>
<dbReference type="SMART" id="SM00449">
    <property type="entry name" value="SPRY"/>
    <property type="match status" value="1"/>
</dbReference>
<dbReference type="SUPFAM" id="SSF49899">
    <property type="entry name" value="Concanavalin A-like lectins/glucanases"/>
    <property type="match status" value="1"/>
</dbReference>
<dbReference type="PROSITE" id="PS50188">
    <property type="entry name" value="B302_SPRY"/>
    <property type="match status" value="1"/>
</dbReference>
<accession>A7EQ00</accession>
<keyword id="KW-0967">Endosome</keyword>
<keyword id="KW-0325">Glycoprotein</keyword>
<keyword id="KW-0472">Membrane</keyword>
<keyword id="KW-0653">Protein transport</keyword>
<keyword id="KW-1185">Reference proteome</keyword>
<keyword id="KW-0735">Signal-anchor</keyword>
<keyword id="KW-0812">Transmembrane</keyword>
<keyword id="KW-1133">Transmembrane helix</keyword>
<keyword id="KW-0813">Transport</keyword>
<keyword id="KW-0926">Vacuole</keyword>
<feature type="chain" id="PRO_0000324485" description="Protein ssh4">
    <location>
        <begin position="1"/>
        <end position="523"/>
    </location>
</feature>
<feature type="topological domain" description="Cytoplasmic" evidence="2">
    <location>
        <begin position="1"/>
        <end position="59"/>
    </location>
</feature>
<feature type="transmembrane region" description="Helical; Signal-anchor for type II membrane protein" evidence="2">
    <location>
        <begin position="60"/>
        <end position="80"/>
    </location>
</feature>
<feature type="topological domain" description="Lumenal" evidence="2">
    <location>
        <begin position="81"/>
        <end position="523"/>
    </location>
</feature>
<feature type="domain" description="B30.2/SPRY" evidence="3">
    <location>
        <begin position="127"/>
        <end position="323"/>
    </location>
</feature>
<feature type="region of interest" description="Disordered" evidence="4">
    <location>
        <begin position="361"/>
        <end position="400"/>
    </location>
</feature>
<feature type="region of interest" description="Disordered" evidence="4">
    <location>
        <begin position="412"/>
        <end position="523"/>
    </location>
</feature>
<feature type="compositionally biased region" description="Polar residues" evidence="4">
    <location>
        <begin position="419"/>
        <end position="436"/>
    </location>
</feature>
<feature type="compositionally biased region" description="Basic and acidic residues" evidence="4">
    <location>
        <begin position="496"/>
        <end position="517"/>
    </location>
</feature>
<feature type="glycosylation site" description="N-linked (GlcNAc...) asparagine" evidence="2">
    <location>
        <position position="421"/>
    </location>
</feature>
<feature type="glycosylation site" description="N-linked (GlcNAc...) asparagine" evidence="2">
    <location>
        <position position="430"/>
    </location>
</feature>
<feature type="glycosylation site" description="N-linked (GlcNAc...) asparagine" evidence="2">
    <location>
        <position position="492"/>
    </location>
</feature>
<evidence type="ECO:0000250" key="1"/>
<evidence type="ECO:0000255" key="2"/>
<evidence type="ECO:0000255" key="3">
    <source>
        <dbReference type="PROSITE-ProRule" id="PRU00548"/>
    </source>
</evidence>
<evidence type="ECO:0000256" key="4">
    <source>
        <dbReference type="SAM" id="MobiDB-lite"/>
    </source>
</evidence>
<evidence type="ECO:0000305" key="5"/>
<reference key="1">
    <citation type="journal article" date="2011" name="PLoS Genet.">
        <title>Genomic analysis of the necrotrophic fungal pathogens Sclerotinia sclerotiorum and Botrytis cinerea.</title>
        <authorList>
            <person name="Amselem J."/>
            <person name="Cuomo C.A."/>
            <person name="van Kan J.A.L."/>
            <person name="Viaud M."/>
            <person name="Benito E.P."/>
            <person name="Couloux A."/>
            <person name="Coutinho P.M."/>
            <person name="de Vries R.P."/>
            <person name="Dyer P.S."/>
            <person name="Fillinger S."/>
            <person name="Fournier E."/>
            <person name="Gout L."/>
            <person name="Hahn M."/>
            <person name="Kohn L."/>
            <person name="Lapalu N."/>
            <person name="Plummer K.M."/>
            <person name="Pradier J.-M."/>
            <person name="Quevillon E."/>
            <person name="Sharon A."/>
            <person name="Simon A."/>
            <person name="ten Have A."/>
            <person name="Tudzynski B."/>
            <person name="Tudzynski P."/>
            <person name="Wincker P."/>
            <person name="Andrew M."/>
            <person name="Anthouard V."/>
            <person name="Beever R.E."/>
            <person name="Beffa R."/>
            <person name="Benoit I."/>
            <person name="Bouzid O."/>
            <person name="Brault B."/>
            <person name="Chen Z."/>
            <person name="Choquer M."/>
            <person name="Collemare J."/>
            <person name="Cotton P."/>
            <person name="Danchin E.G."/>
            <person name="Da Silva C."/>
            <person name="Gautier A."/>
            <person name="Giraud C."/>
            <person name="Giraud T."/>
            <person name="Gonzalez C."/>
            <person name="Grossetete S."/>
            <person name="Gueldener U."/>
            <person name="Henrissat B."/>
            <person name="Howlett B.J."/>
            <person name="Kodira C."/>
            <person name="Kretschmer M."/>
            <person name="Lappartient A."/>
            <person name="Leroch M."/>
            <person name="Levis C."/>
            <person name="Mauceli E."/>
            <person name="Neuveglise C."/>
            <person name="Oeser B."/>
            <person name="Pearson M."/>
            <person name="Poulain J."/>
            <person name="Poussereau N."/>
            <person name="Quesneville H."/>
            <person name="Rascle C."/>
            <person name="Schumacher J."/>
            <person name="Segurens B."/>
            <person name="Sexton A."/>
            <person name="Silva E."/>
            <person name="Sirven C."/>
            <person name="Soanes D.M."/>
            <person name="Talbot N.J."/>
            <person name="Templeton M."/>
            <person name="Yandava C."/>
            <person name="Yarden O."/>
            <person name="Zeng Q."/>
            <person name="Rollins J.A."/>
            <person name="Lebrun M.-H."/>
            <person name="Dickman M."/>
        </authorList>
    </citation>
    <scope>NUCLEOTIDE SEQUENCE [LARGE SCALE GENOMIC DNA]</scope>
    <source>
        <strain>ATCC 18683 / 1980 / Ss-1</strain>
    </source>
</reference>
<gene>
    <name type="primary">ssh4</name>
    <name type="ORF">SS1G_07399</name>
</gene>
<name>SSH4_SCLS1</name>
<proteinExistence type="inferred from homology"/>
<organism>
    <name type="scientific">Sclerotinia sclerotiorum (strain ATCC 18683 / 1980 / Ss-1)</name>
    <name type="common">White mold</name>
    <name type="synonym">Whetzelinia sclerotiorum</name>
    <dbReference type="NCBI Taxonomy" id="665079"/>
    <lineage>
        <taxon>Eukaryota</taxon>
        <taxon>Fungi</taxon>
        <taxon>Dikarya</taxon>
        <taxon>Ascomycota</taxon>
        <taxon>Pezizomycotina</taxon>
        <taxon>Leotiomycetes</taxon>
        <taxon>Helotiales</taxon>
        <taxon>Sclerotiniaceae</taxon>
        <taxon>Sclerotinia</taxon>
    </lineage>
</organism>
<comment type="function">
    <text evidence="1">Components of the endosome-vacuole trafficking pathway that regulates nutrient transport. May be involved in processes which determine whether plasma membrane proteins are degraded or routed to the plasma membrane (By similarity).</text>
</comment>
<comment type="subcellular location">
    <subcellularLocation>
        <location evidence="1">Vacuole membrane</location>
        <topology evidence="1">Single-pass type II membrane protein</topology>
    </subcellularLocation>
    <subcellularLocation>
        <location evidence="1">Endosome membrane</location>
        <topology evidence="1">Single-pass type II membrane protein</topology>
    </subcellularLocation>
</comment>
<comment type="similarity">
    <text evidence="5">Belongs to the SSH4 family.</text>
</comment>